<feature type="chain" id="PRO_0000087102" description="EvC complex member EVC">
    <location>
        <begin position="1"/>
        <end position="992"/>
    </location>
</feature>
<feature type="topological domain" description="Extracellular" evidence="2">
    <location>
        <begin position="1"/>
        <end position="25"/>
    </location>
</feature>
<feature type="transmembrane region" description="Helical" evidence="2">
    <location>
        <begin position="26"/>
        <end position="48"/>
    </location>
</feature>
<feature type="topological domain" description="Cytoplasmic" evidence="2">
    <location>
        <begin position="49"/>
        <end position="992"/>
    </location>
</feature>
<feature type="region of interest" description="Disordered" evidence="3">
    <location>
        <begin position="66"/>
        <end position="105"/>
    </location>
</feature>
<feature type="region of interest" description="Disordered" evidence="3">
    <location>
        <begin position="151"/>
        <end position="181"/>
    </location>
</feature>
<feature type="region of interest" description="Disordered" evidence="3">
    <location>
        <begin position="825"/>
        <end position="854"/>
    </location>
</feature>
<feature type="region of interest" description="Disordered" evidence="3">
    <location>
        <begin position="930"/>
        <end position="992"/>
    </location>
</feature>
<feature type="compositionally biased region" description="Polar residues" evidence="3">
    <location>
        <begin position="66"/>
        <end position="82"/>
    </location>
</feature>
<feature type="compositionally biased region" description="Basic and acidic residues" evidence="3">
    <location>
        <begin position="89"/>
        <end position="99"/>
    </location>
</feature>
<feature type="compositionally biased region" description="Low complexity" evidence="3">
    <location>
        <begin position="156"/>
        <end position="166"/>
    </location>
</feature>
<feature type="compositionally biased region" description="Polar residues" evidence="3">
    <location>
        <begin position="957"/>
        <end position="982"/>
    </location>
</feature>
<feature type="sequence variant" id="VAR_009942" description="In dbSNP:rs2291157." evidence="4">
    <original>Q</original>
    <variation>P</variation>
    <location>
        <position position="74"/>
    </location>
</feature>
<feature type="sequence variant" id="VAR_033852" description="In dbSNP:rs16837598.">
    <original>A</original>
    <variation>V</variation>
    <location>
        <position position="114"/>
    </location>
</feature>
<feature type="sequence variant" id="VAR_066447" description="In EVC; dbSNP:rs1017946059." evidence="6">
    <original>S</original>
    <variation>N</variation>
    <location>
        <position position="206"/>
    </location>
</feature>
<feature type="sequence variant" id="VAR_009943" description="In dbSNP:rs6414624." evidence="4">
    <original>Y</original>
    <variation>H</variation>
    <location>
        <position position="258"/>
    </location>
</feature>
<feature type="sequence variant" id="VAR_009944" description="In WAD; dbSNP:rs121908426." evidence="4">
    <original>S</original>
    <variation>P</variation>
    <location>
        <position position="307"/>
    </location>
</feature>
<feature type="sequence variant" id="VAR_033853" description="In dbSNP:rs28483498.">
    <original>T</original>
    <variation>M</variation>
    <location>
        <position position="372"/>
    </location>
</feature>
<feature type="sequence variant" id="VAR_009945" description="In dbSNP:rs183114391." evidence="4">
    <original>G</original>
    <variation>S</variation>
    <location>
        <position position="403"/>
    </location>
</feature>
<feature type="sequence variant" id="VAR_009946" description="In EVC; dbSNP:rs35953626." evidence="4">
    <original>R</original>
    <variation>Q</variation>
    <location>
        <position position="443"/>
    </location>
</feature>
<feature type="sequence variant" id="VAR_009947" description="In dbSNP:rs2302075." evidence="4">
    <original>T</original>
    <variation>K</variation>
    <location>
        <position position="449"/>
    </location>
</feature>
<feature type="sequence variant" id="VAR_009948" description="In dbSNP:rs1383180." evidence="4">
    <original>R</original>
    <variation>Q</variation>
    <location>
        <position position="576"/>
    </location>
</feature>
<feature type="sequence variant" id="VAR_066448" description="In EVC; atypical phenotype with septal cardiac defects, rhizomelic limb shortening and polydactyly without the typical lip, dental and nail abnormalities of EVC; dbSNP:rs1373632260." evidence="5">
    <original>L</original>
    <variation>P</variation>
    <location>
        <position position="623"/>
    </location>
</feature>
<feature type="sequence variant" id="VAR_009949" description="In dbSNP:rs2279252." evidence="4">
    <original>R</original>
    <variation>Q</variation>
    <location>
        <position position="760"/>
    </location>
</feature>
<feature type="sequence variant" id="VAR_009950" evidence="4">
    <original>D</original>
    <variation>G</variation>
    <location>
        <position position="953"/>
    </location>
</feature>
<feature type="sequence variant" id="VAR_009951">
    <location>
        <position position="965"/>
    </location>
</feature>
<feature type="sequence conflict" description="In Ref. 3; AAF44682." evidence="7" ref="3">
    <location>
        <position position="966"/>
    </location>
</feature>
<dbReference type="EMBL" id="AF216184">
    <property type="protein sequence ID" value="AAF37216.1"/>
    <property type="molecule type" value="mRNA"/>
</dbReference>
<dbReference type="EMBL" id="AF216185">
    <property type="protein sequence ID" value="AAF37217.1"/>
    <property type="molecule type" value="mRNA"/>
</dbReference>
<dbReference type="EMBL" id="AF239742">
    <property type="protein sequence ID" value="AAF44682.1"/>
    <property type="molecule type" value="mRNA"/>
</dbReference>
<dbReference type="CCDS" id="CCDS3383.1"/>
<dbReference type="RefSeq" id="NP_001293019.1">
    <property type="nucleotide sequence ID" value="NM_001306090.1"/>
</dbReference>
<dbReference type="RefSeq" id="NP_001293021.1">
    <property type="nucleotide sequence ID" value="NM_001306092.1"/>
</dbReference>
<dbReference type="RefSeq" id="NP_714928.1">
    <property type="nucleotide sequence ID" value="NM_153717.3"/>
</dbReference>
<dbReference type="RefSeq" id="XP_047305725.1">
    <property type="nucleotide sequence ID" value="XM_047449769.1"/>
</dbReference>
<dbReference type="RefSeq" id="XP_047305726.1">
    <property type="nucleotide sequence ID" value="XM_047449770.1"/>
</dbReference>
<dbReference type="RefSeq" id="XP_047305727.1">
    <property type="nucleotide sequence ID" value="XM_047449771.1"/>
</dbReference>
<dbReference type="RefSeq" id="XP_047305728.1">
    <property type="nucleotide sequence ID" value="XM_047449772.1"/>
</dbReference>
<dbReference type="RefSeq" id="XP_047305729.1">
    <property type="nucleotide sequence ID" value="XM_047449773.1"/>
</dbReference>
<dbReference type="RefSeq" id="XP_047305730.1">
    <property type="nucleotide sequence ID" value="XM_047449774.1"/>
</dbReference>
<dbReference type="RefSeq" id="XP_047305731.1">
    <property type="nucleotide sequence ID" value="XM_047449775.1"/>
</dbReference>
<dbReference type="RefSeq" id="XP_047305732.1">
    <property type="nucleotide sequence ID" value="XM_047449776.1"/>
</dbReference>
<dbReference type="RefSeq" id="XP_047305733.1">
    <property type="nucleotide sequence ID" value="XM_047449777.1"/>
</dbReference>
<dbReference type="RefSeq" id="XP_047305734.1">
    <property type="nucleotide sequence ID" value="XM_047449778.1"/>
</dbReference>
<dbReference type="RefSeq" id="XP_047305735.1">
    <property type="nucleotide sequence ID" value="XM_047449779.1"/>
</dbReference>
<dbReference type="RefSeq" id="XP_047305736.1">
    <property type="nucleotide sequence ID" value="XM_047449780.1"/>
</dbReference>
<dbReference type="RefSeq" id="XP_047305737.1">
    <property type="nucleotide sequence ID" value="XM_047449781.1"/>
</dbReference>
<dbReference type="RefSeq" id="XP_047305738.1">
    <property type="nucleotide sequence ID" value="XM_047449782.1"/>
</dbReference>
<dbReference type="RefSeq" id="XP_047305739.1">
    <property type="nucleotide sequence ID" value="XM_047449783.1"/>
</dbReference>
<dbReference type="RefSeq" id="XP_047305740.1">
    <property type="nucleotide sequence ID" value="XM_047449784.1"/>
</dbReference>
<dbReference type="RefSeq" id="XP_047305741.1">
    <property type="nucleotide sequence ID" value="XM_047449785.1"/>
</dbReference>
<dbReference type="RefSeq" id="XP_047305742.1">
    <property type="nucleotide sequence ID" value="XM_047449786.1"/>
</dbReference>
<dbReference type="RefSeq" id="XP_047305743.1">
    <property type="nucleotide sequence ID" value="XM_047449787.1"/>
</dbReference>
<dbReference type="RefSeq" id="XP_047305744.1">
    <property type="nucleotide sequence ID" value="XM_047449788.1"/>
</dbReference>
<dbReference type="RefSeq" id="XP_047305745.1">
    <property type="nucleotide sequence ID" value="XM_047449789.1"/>
</dbReference>
<dbReference type="RefSeq" id="XP_047305746.1">
    <property type="nucleotide sequence ID" value="XM_047449790.1"/>
</dbReference>
<dbReference type="RefSeq" id="XP_047305747.1">
    <property type="nucleotide sequence ID" value="XM_047449791.1"/>
</dbReference>
<dbReference type="RefSeq" id="XP_047305748.1">
    <property type="nucleotide sequence ID" value="XM_047449792.1"/>
</dbReference>
<dbReference type="RefSeq" id="XP_047305749.1">
    <property type="nucleotide sequence ID" value="XM_047449793.1"/>
</dbReference>
<dbReference type="RefSeq" id="XP_047305750.1">
    <property type="nucleotide sequence ID" value="XM_047449794.1"/>
</dbReference>
<dbReference type="RefSeq" id="XP_047305751.1">
    <property type="nucleotide sequence ID" value="XM_047449795.1"/>
</dbReference>
<dbReference type="RefSeq" id="XP_047305752.1">
    <property type="nucleotide sequence ID" value="XM_047449796.1"/>
</dbReference>
<dbReference type="RefSeq" id="XP_047305753.1">
    <property type="nucleotide sequence ID" value="XM_047449797.1"/>
</dbReference>
<dbReference type="RefSeq" id="XP_047305754.1">
    <property type="nucleotide sequence ID" value="XM_047449798.1"/>
</dbReference>
<dbReference type="RefSeq" id="XP_047305755.1">
    <property type="nucleotide sequence ID" value="XM_047449799.1"/>
</dbReference>
<dbReference type="SMR" id="P57679"/>
<dbReference type="BioGRID" id="108422">
    <property type="interactions" value="5"/>
</dbReference>
<dbReference type="FunCoup" id="P57679">
    <property type="interactions" value="143"/>
</dbReference>
<dbReference type="IntAct" id="P57679">
    <property type="interactions" value="1"/>
</dbReference>
<dbReference type="STRING" id="9606.ENSP00000264956"/>
<dbReference type="iPTMnet" id="P57679"/>
<dbReference type="PhosphoSitePlus" id="P57679"/>
<dbReference type="BioMuta" id="EVC"/>
<dbReference type="DMDM" id="12229783"/>
<dbReference type="jPOST" id="P57679"/>
<dbReference type="MassIVE" id="P57679"/>
<dbReference type="PaxDb" id="9606-ENSP00000264956"/>
<dbReference type="PeptideAtlas" id="P57679"/>
<dbReference type="ProteomicsDB" id="57006"/>
<dbReference type="Antibodypedia" id="2233">
    <property type="antibodies" value="85 antibodies from 14 providers"/>
</dbReference>
<dbReference type="DNASU" id="2121"/>
<dbReference type="Ensembl" id="ENST00000264956.11">
    <property type="protein sequence ID" value="ENSP00000264956.6"/>
    <property type="gene ID" value="ENSG00000072840.13"/>
</dbReference>
<dbReference type="GeneID" id="2121"/>
<dbReference type="KEGG" id="hsa:2121"/>
<dbReference type="MANE-Select" id="ENST00000264956.11">
    <property type="protein sequence ID" value="ENSP00000264956.6"/>
    <property type="RefSeq nucleotide sequence ID" value="NM_153717.3"/>
    <property type="RefSeq protein sequence ID" value="NP_714928.1"/>
</dbReference>
<dbReference type="UCSC" id="uc003gil.2">
    <property type="organism name" value="human"/>
</dbReference>
<dbReference type="AGR" id="HGNC:3497"/>
<dbReference type="CTD" id="2121"/>
<dbReference type="DisGeNET" id="2121"/>
<dbReference type="GeneCards" id="EVC"/>
<dbReference type="GeneReviews" id="EVC"/>
<dbReference type="HGNC" id="HGNC:3497">
    <property type="gene designation" value="EVC"/>
</dbReference>
<dbReference type="HPA" id="ENSG00000072840">
    <property type="expression patterns" value="Low tissue specificity"/>
</dbReference>
<dbReference type="MalaCards" id="EVC"/>
<dbReference type="MIM" id="193530">
    <property type="type" value="phenotype"/>
</dbReference>
<dbReference type="MIM" id="225500">
    <property type="type" value="phenotype"/>
</dbReference>
<dbReference type="MIM" id="604831">
    <property type="type" value="gene"/>
</dbReference>
<dbReference type="neXtProt" id="NX_P57679"/>
<dbReference type="OpenTargets" id="ENSG00000072840"/>
<dbReference type="Orphanet" id="952">
    <property type="disease" value="Acrofacial dysostosis, Weyers type"/>
</dbReference>
<dbReference type="Orphanet" id="289">
    <property type="disease" value="Ellis Van Creveld syndrome"/>
</dbReference>
<dbReference type="PharmGKB" id="PA27911"/>
<dbReference type="VEuPathDB" id="HostDB:ENSG00000072840"/>
<dbReference type="eggNOG" id="ENOG502QUDD">
    <property type="taxonomic scope" value="Eukaryota"/>
</dbReference>
<dbReference type="GeneTree" id="ENSGT00940000154127"/>
<dbReference type="HOGENOM" id="CLU_014037_0_0_1"/>
<dbReference type="InParanoid" id="P57679"/>
<dbReference type="OMA" id="KDGQVWS"/>
<dbReference type="OrthoDB" id="8910527at2759"/>
<dbReference type="PAN-GO" id="P57679">
    <property type="GO annotations" value="2 GO annotations based on evolutionary models"/>
</dbReference>
<dbReference type="PhylomeDB" id="P57679"/>
<dbReference type="TreeFam" id="TF335835"/>
<dbReference type="PathwayCommons" id="P57679"/>
<dbReference type="Reactome" id="R-HSA-5632684">
    <property type="pathway name" value="Hedgehog 'on' state"/>
</dbReference>
<dbReference type="Reactome" id="R-HSA-5635838">
    <property type="pathway name" value="Activation of SMO"/>
</dbReference>
<dbReference type="SignaLink" id="P57679"/>
<dbReference type="BioGRID-ORCS" id="2121">
    <property type="hits" value="14 hits in 1141 CRISPR screens"/>
</dbReference>
<dbReference type="ChiTaRS" id="EVC">
    <property type="organism name" value="human"/>
</dbReference>
<dbReference type="GenomeRNAi" id="2121"/>
<dbReference type="Pharos" id="P57679">
    <property type="development level" value="Tbio"/>
</dbReference>
<dbReference type="PRO" id="PR:P57679"/>
<dbReference type="Proteomes" id="UP000005640">
    <property type="component" value="Chromosome 4"/>
</dbReference>
<dbReference type="RNAct" id="P57679">
    <property type="molecule type" value="protein"/>
</dbReference>
<dbReference type="Bgee" id="ENSG00000072840">
    <property type="expression patterns" value="Expressed in sural nerve and 101 other cell types or tissues"/>
</dbReference>
<dbReference type="ExpressionAtlas" id="P57679">
    <property type="expression patterns" value="baseline and differential"/>
</dbReference>
<dbReference type="GO" id="GO:0036064">
    <property type="term" value="C:ciliary basal body"/>
    <property type="evidence" value="ECO:0000250"/>
    <property type="project" value="UniProtKB"/>
</dbReference>
<dbReference type="GO" id="GO:0060170">
    <property type="term" value="C:ciliary membrane"/>
    <property type="evidence" value="ECO:0000318"/>
    <property type="project" value="GO_Central"/>
</dbReference>
<dbReference type="GO" id="GO:0005929">
    <property type="term" value="C:cilium"/>
    <property type="evidence" value="ECO:0000314"/>
    <property type="project" value="UniProtKB"/>
</dbReference>
<dbReference type="GO" id="GO:0005737">
    <property type="term" value="C:cytoplasm"/>
    <property type="evidence" value="ECO:0007669"/>
    <property type="project" value="UniProtKB-KW"/>
</dbReference>
<dbReference type="GO" id="GO:0098797">
    <property type="term" value="C:plasma membrane protein complex"/>
    <property type="evidence" value="ECO:0000318"/>
    <property type="project" value="GO_Central"/>
</dbReference>
<dbReference type="GO" id="GO:0051216">
    <property type="term" value="P:cartilage development"/>
    <property type="evidence" value="ECO:0007669"/>
    <property type="project" value="Ensembl"/>
</dbReference>
<dbReference type="GO" id="GO:0003416">
    <property type="term" value="P:endochondral bone growth"/>
    <property type="evidence" value="ECO:0000250"/>
    <property type="project" value="UniProtKB"/>
</dbReference>
<dbReference type="GO" id="GO:0007517">
    <property type="term" value="P:muscle organ development"/>
    <property type="evidence" value="ECO:0000304"/>
    <property type="project" value="ProtInc"/>
</dbReference>
<dbReference type="GO" id="GO:0045880">
    <property type="term" value="P:positive regulation of smoothened signaling pathway"/>
    <property type="evidence" value="ECO:0000250"/>
    <property type="project" value="UniProtKB"/>
</dbReference>
<dbReference type="GO" id="GO:0001501">
    <property type="term" value="P:skeletal system development"/>
    <property type="evidence" value="ECO:0000304"/>
    <property type="project" value="ProtInc"/>
</dbReference>
<dbReference type="GO" id="GO:0007224">
    <property type="term" value="P:smoothened signaling pathway"/>
    <property type="evidence" value="ECO:0007669"/>
    <property type="project" value="InterPro"/>
</dbReference>
<dbReference type="InterPro" id="IPR026501">
    <property type="entry name" value="Limbin/EVC"/>
</dbReference>
<dbReference type="PANTHER" id="PTHR16795:SF13">
    <property type="entry name" value="EVC COMPLEX MEMBER EVC"/>
    <property type="match status" value="1"/>
</dbReference>
<dbReference type="PANTHER" id="PTHR16795">
    <property type="entry name" value="LIMBIN/ELLIS-VAN CREVELD PROTEIN"/>
    <property type="match status" value="1"/>
</dbReference>
<name>EVC_HUMAN</name>
<comment type="function">
    <text evidence="1">Component of the EvC complex that positively regulates ciliary Hedgehog (Hh) signaling. Involved in endochondral growth and skeletal development.</text>
</comment>
<comment type="subunit">
    <text evidence="1">Component of the EvC complex composed of EFCAB7, IQCE, EVC2 and EVC; built from two subcomplexes, EVC2:EVC and EFCAB7:IQCE. Interacts with EVC2. Interacts with EFCAB7. Interacts with IQCE.</text>
</comment>
<comment type="subcellular location">
    <subcellularLocation>
        <location evidence="1">Cell membrane</location>
        <topology evidence="1">Single-pass membrane protein</topology>
    </subcellularLocation>
    <subcellularLocation>
        <location evidence="1">Cytoplasm</location>
        <location evidence="1">Cytoskeleton</location>
        <location evidence="1">Cilium basal body</location>
    </subcellularLocation>
    <subcellularLocation>
        <location evidence="1">Cell projection</location>
        <location evidence="1">Cilium</location>
    </subcellularLocation>
    <subcellularLocation>
        <location evidence="1">Cell projection</location>
        <location evidence="1">Cilium membrane</location>
    </subcellularLocation>
    <text evidence="1">EVC2 is required for the localization of EVC at the base of primary cilia. The EvC complex localizes at the base of cilia in the EvC zone of primary cilia in a EFCAB7-dependent manner.</text>
</comment>
<comment type="tissue specificity">
    <text>Found in the developing vertebral bodies, ribs, upper and lower limbs, heart, kidney, lung.</text>
</comment>
<comment type="disease" evidence="4 5 6">
    <disease id="DI-00449">
        <name>Ellis-van Creveld syndrome</name>
        <acronym>EVC</acronym>
        <description>An autosomal recessive condition characterized by the clinical tetrad of chondrodystrophy, polydactyly, ectodermal dysplasia and cardiac anomalies. Patients manifest short-limb dwarfism, short ribs, postaxial polydactyly, and dysplastic nails and teeth. Congenital heart defects, most commonly an atrioventricular septal defect, are observed in 60% of affected individuals.</description>
        <dbReference type="MIM" id="225500"/>
    </disease>
    <text>The disease is caused by variants affecting the gene represented in this entry.</text>
</comment>
<comment type="disease" evidence="4">
    <disease id="DI-00029">
        <name>Acrofacial dysostosis, Weyers type</name>
        <acronym>WAD</acronym>
        <description>An autosomal dominant condition characterized by dysplastic nails, postaxial polydactyly, dental anomalies, short limbs, short stature and normal intelligence. The phenotype is milder than Ellis-van Creveld syndrome.</description>
        <dbReference type="MIM" id="193530"/>
    </disease>
    <text>The disease is caused by variants affecting the gene represented in this entry.</text>
</comment>
<keyword id="KW-1003">Cell membrane</keyword>
<keyword id="KW-0966">Cell projection</keyword>
<keyword id="KW-1186">Ciliopathy</keyword>
<keyword id="KW-0969">Cilium</keyword>
<keyword id="KW-0963">Cytoplasm</keyword>
<keyword id="KW-0206">Cytoskeleton</keyword>
<keyword id="KW-0225">Disease variant</keyword>
<keyword id="KW-0242">Dwarfism</keyword>
<keyword id="KW-0038">Ectodermal dysplasia</keyword>
<keyword id="KW-0472">Membrane</keyword>
<keyword id="KW-1267">Proteomics identification</keyword>
<keyword id="KW-1185">Reference proteome</keyword>
<keyword id="KW-0812">Transmembrane</keyword>
<keyword id="KW-1133">Transmembrane helix</keyword>
<protein>
    <recommendedName>
        <fullName evidence="7">EvC complex member EVC</fullName>
    </recommendedName>
    <alternativeName>
        <fullName>DWF-1</fullName>
    </alternativeName>
    <alternativeName>
        <fullName>Ellis-van Creveld syndrome protein</fullName>
    </alternativeName>
</protein>
<evidence type="ECO:0000250" key="1">
    <source>
        <dbReference type="UniProtKB" id="P57680"/>
    </source>
</evidence>
<evidence type="ECO:0000255" key="2"/>
<evidence type="ECO:0000256" key="3">
    <source>
        <dbReference type="SAM" id="MobiDB-lite"/>
    </source>
</evidence>
<evidence type="ECO:0000269" key="4">
    <source>
    </source>
</evidence>
<evidence type="ECO:0000269" key="5">
    <source>
    </source>
</evidence>
<evidence type="ECO:0000269" key="6">
    <source>
    </source>
</evidence>
<evidence type="ECO:0000305" key="7"/>
<reference key="1">
    <citation type="journal article" date="2000" name="Nat. Genet.">
        <title>Mutations in a new gene in Ellis-van Creveld syndrome and Weyers acrodental dysostosis.</title>
        <authorList>
            <person name="Ruiz-Perez V.L."/>
            <person name="Ide S.E."/>
            <person name="Strom T.M."/>
            <person name="Lorenz B."/>
            <person name="Wilson D."/>
            <person name="Woods K."/>
            <person name="King L."/>
            <person name="Francomano C."/>
            <person name="Freisinger P."/>
            <person name="Spranger S."/>
            <person name="Marino B."/>
            <person name="Dallapiccola B."/>
            <person name="Wright M."/>
            <person name="Meitinger T."/>
            <person name="Polymeropoulos M.H."/>
            <person name="Goodship J."/>
        </authorList>
    </citation>
    <scope>NUCLEOTIDE SEQUENCE [MRNA]</scope>
    <scope>VARIANT WAD PRO-307</scope>
    <scope>VARIANT EVC GLN-443</scope>
    <scope>VARIANTS PRO-74; HIS-258; SER-403; LYS-449; GLN-576; GLN-760 AND GLY-953</scope>
    <source>
        <tissue>Brain</tissue>
        <tissue>Heart</tissue>
    </source>
</reference>
<reference key="2">
    <citation type="journal article" date="2000" name="Nat. Genet.">
        <authorList>
            <person name="Ruiz-Perez V.L."/>
            <person name="Ide S.E."/>
            <person name="Strom T.M."/>
            <person name="Lorenz B."/>
            <person name="Wilson D."/>
            <person name="Woods K."/>
            <person name="King L."/>
            <person name="Francomano C."/>
            <person name="Freisinger P."/>
            <person name="Spranger S."/>
            <person name="Marino B."/>
            <person name="Dallapiccola B."/>
            <person name="Wright M."/>
            <person name="Meitinger T."/>
            <person name="Polymeropoulos M.H."/>
            <person name="Goodship J."/>
        </authorList>
    </citation>
    <scope>ERRATUM OF PUBMED:10700184</scope>
</reference>
<reference key="3">
    <citation type="submission" date="2000-02" db="EMBL/GenBank/DDBJ databases">
        <title>Candidate gene for Ellis-van Creveld disorder.</title>
        <authorList>
            <person name="Galdzicka M."/>
            <person name="Damschroder-Williams P."/>
            <person name="Hirshman H.G."/>
            <person name="Winfield S.L."/>
            <person name="Simmons A."/>
            <person name="Lovett M."/>
            <person name="Martin B.M."/>
            <person name="Ginns E.I."/>
        </authorList>
    </citation>
    <scope>NUCLEOTIDE SEQUENCE [MRNA]</scope>
</reference>
<reference key="4">
    <citation type="journal article" date="2008" name="BMC Med. Genet.">
        <title>Extending the spectrum of Ellis van Creveld syndrome: a large family with a mild mutation in the EVC gene.</title>
        <authorList>
            <person name="Ulucan H."/>
            <person name="Gul D."/>
            <person name="Sapp J.C."/>
            <person name="Cockerham J."/>
            <person name="Johnston J.J."/>
            <person name="Biesecker L.G."/>
        </authorList>
    </citation>
    <scope>VARIANT EVC PRO-623</scope>
</reference>
<reference key="5">
    <citation type="journal article" date="2010" name="Pediatr. Int.">
        <title>A novel missense mutation in the EVC gene underlies Ellis-van Creveld syndrome in a Pakistani family.</title>
        <authorList>
            <person name="Kalsoom U.-E."/>
            <person name="Wasif N."/>
            <person name="Tariq M."/>
            <person name="Ahmad W."/>
        </authorList>
    </citation>
    <scope>VARIANT EVC ASN-206</scope>
</reference>
<sequence>MARGGAACKSDARLLLGRDALRPAPALLAPAVLLGAALGLGLGLWLGCRAGRQRTRHQKDDTQNLLKNLESNAQTPSETGSPSRRRKREVQMSKDKEAVDECEPPSNSNITAFALKAKVIYPINQKFRPLADGSSNPSLHENLKQAVLPHQPVEASPSSSLGSLSQGEKDDCSSSSSVHSATSDDRFLSRTFLRVNAFPEVLACESVDVDLCIYSLHLKDLLHLDTALRQEKHMMFIQIFKMCLLDLLPKKKSDDELYQKILSKQEKDLEELEKGLQVKLSNTEMSGAGDSEYITLADVEKKEREYSEQLIDNMEAFWKQMANIQHFLVDQFKCSSSKARQLMMTLTERMIAAEGLLCDSQELQALDALERTMGRAHMAKVIEFLKLQVQEETRCRLAAISHGLELLAGEGKLSGRQKEELLTQQHKAFWQEAERFSREFVQRGKDLVTASLAHQVEGTAKLTLAQEEEQRSFLAEAQPTADPEKFLEAFHEVLERQRLMQCDLEEEENVRATEAVVALCQELYFSTVDTFQKFVDALFLQTLPGMTGLPPEECDYLRQEVQENAAWQLGKSNRFRRQQWKLFQELLEQDQQVWMEECALSSVLQTHLREDHEGTIRGVLGRLGGLTEESTRCVLQGHDLLLRSALRRLALRGNALATLTQMRLSGKKHLLQELREQRALEQGSSQCLDEHQWQLLRALEARVLEEASRLEEEAQQTRLQLQQRLLAEAQEVGQLLQQHMECAIGQALLVHARNAATKSRAKDRDDFKRTLMEAAVESVYVTSAGVSRLVQAYYQQIGRIMEDHEERKLQHLKTLQGERMENYKLRKKQELSNPSSGSRTAGGAHETSQAVHQRMLSQQKRFLAQFPVHQQMRLHAQQQQAGVMDLLEAQLETQLQEAEQNFISELAALARVPLAESKLLPAKRGLLEKPLRTKRKKPLPQERGDLGVPNNEDLASGDQTSGSLSSKRLSQQESEAGDSGNSKKMLKRRSNL</sequence>
<accession>P57679</accession>
<gene>
    <name type="primary">EVC</name>
</gene>
<organism>
    <name type="scientific">Homo sapiens</name>
    <name type="common">Human</name>
    <dbReference type="NCBI Taxonomy" id="9606"/>
    <lineage>
        <taxon>Eukaryota</taxon>
        <taxon>Metazoa</taxon>
        <taxon>Chordata</taxon>
        <taxon>Craniata</taxon>
        <taxon>Vertebrata</taxon>
        <taxon>Euteleostomi</taxon>
        <taxon>Mammalia</taxon>
        <taxon>Eutheria</taxon>
        <taxon>Euarchontoglires</taxon>
        <taxon>Primates</taxon>
        <taxon>Haplorrhini</taxon>
        <taxon>Catarrhini</taxon>
        <taxon>Hominidae</taxon>
        <taxon>Homo</taxon>
    </lineage>
</organism>
<proteinExistence type="evidence at protein level"/>